<reference key="1">
    <citation type="journal article" date="2004" name="Proc. Natl. Acad. Sci. U.S.A.">
        <title>Genome sequence of Picrophilus torridus and its implications for life around pH 0.</title>
        <authorList>
            <person name="Fuetterer O."/>
            <person name="Angelov A."/>
            <person name="Liesegang H."/>
            <person name="Gottschalk G."/>
            <person name="Schleper C."/>
            <person name="Schepers B."/>
            <person name="Dock C."/>
            <person name="Antranikian G."/>
            <person name="Liebl W."/>
        </authorList>
    </citation>
    <scope>NUCLEOTIDE SEQUENCE [LARGE SCALE GENOMIC DNA]</scope>
    <source>
        <strain>ATCC 700027 / DSM 9790 / JCM 10055 / NBRC 100828 / KAW 2/3</strain>
    </source>
</reference>
<dbReference type="EMBL" id="AE017261">
    <property type="protein sequence ID" value="AAT42909.1"/>
    <property type="molecule type" value="Genomic_DNA"/>
</dbReference>
<dbReference type="RefSeq" id="WP_011177125.1">
    <property type="nucleotide sequence ID" value="NC_005877.1"/>
</dbReference>
<dbReference type="SMR" id="Q6L293"/>
<dbReference type="FunCoup" id="Q6L293">
    <property type="interactions" value="114"/>
</dbReference>
<dbReference type="STRING" id="263820.PTO0324"/>
<dbReference type="PaxDb" id="263820-PTO0324"/>
<dbReference type="GeneID" id="2844279"/>
<dbReference type="KEGG" id="pto:PTO0324"/>
<dbReference type="PATRIC" id="fig|263820.9.peg.346"/>
<dbReference type="eggNOG" id="arCOG04243">
    <property type="taxonomic scope" value="Archaea"/>
</dbReference>
<dbReference type="HOGENOM" id="CLU_046483_4_0_2"/>
<dbReference type="InParanoid" id="Q6L293"/>
<dbReference type="OrthoDB" id="52677at2157"/>
<dbReference type="Proteomes" id="UP000000438">
    <property type="component" value="Chromosome"/>
</dbReference>
<dbReference type="GO" id="GO:0022627">
    <property type="term" value="C:cytosolic small ribosomal subunit"/>
    <property type="evidence" value="ECO:0007669"/>
    <property type="project" value="TreeGrafter"/>
</dbReference>
<dbReference type="GO" id="GO:0003723">
    <property type="term" value="F:RNA binding"/>
    <property type="evidence" value="ECO:0007669"/>
    <property type="project" value="TreeGrafter"/>
</dbReference>
<dbReference type="GO" id="GO:0003735">
    <property type="term" value="F:structural constituent of ribosome"/>
    <property type="evidence" value="ECO:0007669"/>
    <property type="project" value="InterPro"/>
</dbReference>
<dbReference type="GO" id="GO:0000462">
    <property type="term" value="P:maturation of SSU-rRNA from tricistronic rRNA transcript (SSU-rRNA, 5.8S rRNA, LSU-rRNA)"/>
    <property type="evidence" value="ECO:0007669"/>
    <property type="project" value="TreeGrafter"/>
</dbReference>
<dbReference type="GO" id="GO:0006412">
    <property type="term" value="P:translation"/>
    <property type="evidence" value="ECO:0007669"/>
    <property type="project" value="UniProtKB-UniRule"/>
</dbReference>
<dbReference type="Gene3D" id="3.30.230.10">
    <property type="match status" value="1"/>
</dbReference>
<dbReference type="HAMAP" id="MF_00532_A">
    <property type="entry name" value="Ribosomal_uS9_A"/>
    <property type="match status" value="1"/>
</dbReference>
<dbReference type="InterPro" id="IPR020568">
    <property type="entry name" value="Ribosomal_Su5_D2-typ_SF"/>
</dbReference>
<dbReference type="InterPro" id="IPR000754">
    <property type="entry name" value="Ribosomal_uS9"/>
</dbReference>
<dbReference type="InterPro" id="IPR019958">
    <property type="entry name" value="Ribosomal_uS9_archaeal"/>
</dbReference>
<dbReference type="InterPro" id="IPR020574">
    <property type="entry name" value="Ribosomal_uS9_CS"/>
</dbReference>
<dbReference type="InterPro" id="IPR014721">
    <property type="entry name" value="Ribsml_uS5_D2-typ_fold_subgr"/>
</dbReference>
<dbReference type="NCBIfam" id="NF001749">
    <property type="entry name" value="PRK00474.1"/>
    <property type="match status" value="1"/>
</dbReference>
<dbReference type="NCBIfam" id="TIGR03627">
    <property type="entry name" value="uS9_arch"/>
    <property type="match status" value="1"/>
</dbReference>
<dbReference type="PANTHER" id="PTHR21569:SF16">
    <property type="entry name" value="RIBOSOMAL PROTEIN S16"/>
    <property type="match status" value="1"/>
</dbReference>
<dbReference type="PANTHER" id="PTHR21569">
    <property type="entry name" value="RIBOSOMAL PROTEIN S9"/>
    <property type="match status" value="1"/>
</dbReference>
<dbReference type="Pfam" id="PF00380">
    <property type="entry name" value="Ribosomal_S9"/>
    <property type="match status" value="1"/>
</dbReference>
<dbReference type="SUPFAM" id="SSF54211">
    <property type="entry name" value="Ribosomal protein S5 domain 2-like"/>
    <property type="match status" value="1"/>
</dbReference>
<dbReference type="PROSITE" id="PS00360">
    <property type="entry name" value="RIBOSOMAL_S9"/>
    <property type="match status" value="1"/>
</dbReference>
<feature type="chain" id="PRO_0000111468" description="Small ribosomal subunit protein uS9">
    <location>
        <begin position="1"/>
        <end position="133"/>
    </location>
</feature>
<accession>Q6L293</accession>
<gene>
    <name evidence="1" type="primary">rps9</name>
    <name type="ordered locus">PTO0324</name>
</gene>
<proteinExistence type="inferred from homology"/>
<evidence type="ECO:0000255" key="1">
    <source>
        <dbReference type="HAMAP-Rule" id="MF_00532"/>
    </source>
</evidence>
<evidence type="ECO:0000305" key="2"/>
<sequence>MSDYIIKVGKRKTAIARAIIRKGSGKFLINGYPIELYPIEILREKMLEPIRILGDRSKEIDIDVNVHGGGNTGQADATRTAMAKAIIEYFKDSDLEAEIRAYDRSMLVNDVRRKMPKKPMGYGARAKRQKSYR</sequence>
<organism>
    <name type="scientific">Picrophilus torridus (strain ATCC 700027 / DSM 9790 / JCM 10055 / NBRC 100828 / KAW 2/3)</name>
    <dbReference type="NCBI Taxonomy" id="1122961"/>
    <lineage>
        <taxon>Archaea</taxon>
        <taxon>Methanobacteriati</taxon>
        <taxon>Thermoplasmatota</taxon>
        <taxon>Thermoplasmata</taxon>
        <taxon>Thermoplasmatales</taxon>
        <taxon>Picrophilaceae</taxon>
        <taxon>Picrophilus</taxon>
    </lineage>
</organism>
<name>RS9_PICTO</name>
<comment type="similarity">
    <text evidence="1">Belongs to the universal ribosomal protein uS9 family.</text>
</comment>
<keyword id="KW-0687">Ribonucleoprotein</keyword>
<keyword id="KW-0689">Ribosomal protein</keyword>
<protein>
    <recommendedName>
        <fullName evidence="1">Small ribosomal subunit protein uS9</fullName>
    </recommendedName>
    <alternativeName>
        <fullName evidence="2">30S ribosomal protein S9</fullName>
    </alternativeName>
</protein>